<name>F16PA_MARSD</name>
<sequence length="338" mass="37428">MTQQITVTEHLLLHQKQIPGATGQFTHLFNELVLSAKIISREVNKAGLVDVLGFTGEVNVQGEEVKKLDEYANRILIHRMARSGVLCAMASEENADIIEIPHGLPQGNYIIIFDPLDGSSNIDVNVNIGTIFSIFRRKSKLGTPVQSTDVLQAGCEQVAAGYILYGSSTMLVFTTGDGVHGFTMDPGVGEFLLSHPNMKIPDTGNIYSVNEGYWPYWSEATKKVVGHFKSRDNIHGKPYSLRYIGSLVADFHRNLIYGGVFMYPADDRDPKKPRGKLRLLCEASPMAMLIEQAGGRATDGTQRILDIIPDDLHQRVPLFIGSRHEVETISNIYKENEG</sequence>
<proteinExistence type="inferred from homology"/>
<protein>
    <recommendedName>
        <fullName evidence="1">Fructose-1,6-bisphosphatase class 1</fullName>
        <shortName evidence="1">FBPase class 1</shortName>
        <ecNumber evidence="1">3.1.3.11</ecNumber>
    </recommendedName>
    <alternativeName>
        <fullName evidence="1">D-fructose-1,6-bisphosphate 1-phosphohydrolase class 1</fullName>
    </alternativeName>
</protein>
<accession>C6BTU7</accession>
<comment type="catalytic activity">
    <reaction evidence="1">
        <text>beta-D-fructose 1,6-bisphosphate + H2O = beta-D-fructose 6-phosphate + phosphate</text>
        <dbReference type="Rhea" id="RHEA:11064"/>
        <dbReference type="ChEBI" id="CHEBI:15377"/>
        <dbReference type="ChEBI" id="CHEBI:32966"/>
        <dbReference type="ChEBI" id="CHEBI:43474"/>
        <dbReference type="ChEBI" id="CHEBI:57634"/>
        <dbReference type="EC" id="3.1.3.11"/>
    </reaction>
</comment>
<comment type="cofactor">
    <cofactor evidence="1">
        <name>Mg(2+)</name>
        <dbReference type="ChEBI" id="CHEBI:18420"/>
    </cofactor>
    <text evidence="1">Binds 2 magnesium ions per subunit.</text>
</comment>
<comment type="pathway">
    <text evidence="1">Carbohydrate biosynthesis; gluconeogenesis.</text>
</comment>
<comment type="subunit">
    <text evidence="1">Homotetramer.</text>
</comment>
<comment type="subcellular location">
    <subcellularLocation>
        <location evidence="1">Cytoplasm</location>
    </subcellularLocation>
</comment>
<comment type="similarity">
    <text evidence="1">Belongs to the FBPase class 1 family.</text>
</comment>
<reference key="1">
    <citation type="submission" date="2009-06" db="EMBL/GenBank/DDBJ databases">
        <title>Complete sequence of Desulfovibrio salexigens DSM 2638.</title>
        <authorList>
            <consortium name="US DOE Joint Genome Institute"/>
            <person name="Lucas S."/>
            <person name="Copeland A."/>
            <person name="Lapidus A."/>
            <person name="Glavina del Rio T."/>
            <person name="Tice H."/>
            <person name="Bruce D."/>
            <person name="Goodwin L."/>
            <person name="Pitluck S."/>
            <person name="Munk A.C."/>
            <person name="Brettin T."/>
            <person name="Detter J.C."/>
            <person name="Han C."/>
            <person name="Tapia R."/>
            <person name="Larimer F."/>
            <person name="Land M."/>
            <person name="Hauser L."/>
            <person name="Kyrpides N."/>
            <person name="Anderson I."/>
            <person name="Wall J.D."/>
            <person name="Arkin A.P."/>
            <person name="Dehal P."/>
            <person name="Chivian D."/>
            <person name="Giles B."/>
            <person name="Hazen T.C."/>
        </authorList>
    </citation>
    <scope>NUCLEOTIDE SEQUENCE [LARGE SCALE GENOMIC DNA]</scope>
    <source>
        <strain>ATCC 14822 / DSM 2638 / NCIMB 8403 / VKM B-1763</strain>
    </source>
</reference>
<evidence type="ECO:0000255" key="1">
    <source>
        <dbReference type="HAMAP-Rule" id="MF_01855"/>
    </source>
</evidence>
<organism>
    <name type="scientific">Maridesulfovibrio salexigens (strain ATCC 14822 / DSM 2638 / NCIMB 8403 / VKM B-1763)</name>
    <name type="common">Desulfovibrio salexigens</name>
    <dbReference type="NCBI Taxonomy" id="526222"/>
    <lineage>
        <taxon>Bacteria</taxon>
        <taxon>Pseudomonadati</taxon>
        <taxon>Thermodesulfobacteriota</taxon>
        <taxon>Desulfovibrionia</taxon>
        <taxon>Desulfovibrionales</taxon>
        <taxon>Desulfovibrionaceae</taxon>
        <taxon>Maridesulfovibrio</taxon>
    </lineage>
</organism>
<feature type="chain" id="PRO_1000216148" description="Fructose-1,6-bisphosphatase class 1">
    <location>
        <begin position="1"/>
        <end position="338"/>
    </location>
</feature>
<feature type="binding site" evidence="1">
    <location>
        <position position="92"/>
    </location>
    <ligand>
        <name>Mg(2+)</name>
        <dbReference type="ChEBI" id="CHEBI:18420"/>
        <label>1</label>
    </ligand>
</feature>
<feature type="binding site" evidence="1">
    <location>
        <position position="114"/>
    </location>
    <ligand>
        <name>Mg(2+)</name>
        <dbReference type="ChEBI" id="CHEBI:18420"/>
        <label>1</label>
    </ligand>
</feature>
<feature type="binding site" evidence="1">
    <location>
        <position position="114"/>
    </location>
    <ligand>
        <name>Mg(2+)</name>
        <dbReference type="ChEBI" id="CHEBI:18420"/>
        <label>2</label>
    </ligand>
</feature>
<feature type="binding site" evidence="1">
    <location>
        <position position="116"/>
    </location>
    <ligand>
        <name>Mg(2+)</name>
        <dbReference type="ChEBI" id="CHEBI:18420"/>
        <label>1</label>
    </ligand>
</feature>
<feature type="binding site" evidence="1">
    <location>
        <begin position="117"/>
        <end position="120"/>
    </location>
    <ligand>
        <name>substrate</name>
    </ligand>
</feature>
<feature type="binding site" evidence="1">
    <location>
        <position position="117"/>
    </location>
    <ligand>
        <name>Mg(2+)</name>
        <dbReference type="ChEBI" id="CHEBI:18420"/>
        <label>2</label>
    </ligand>
</feature>
<feature type="binding site" evidence="1">
    <location>
        <position position="210"/>
    </location>
    <ligand>
        <name>substrate</name>
    </ligand>
</feature>
<feature type="binding site" evidence="1">
    <location>
        <position position="243"/>
    </location>
    <ligand>
        <name>substrate</name>
    </ligand>
</feature>
<feature type="binding site" evidence="1">
    <location>
        <position position="276"/>
    </location>
    <ligand>
        <name>substrate</name>
    </ligand>
</feature>
<feature type="binding site" evidence="1">
    <location>
        <position position="282"/>
    </location>
    <ligand>
        <name>Mg(2+)</name>
        <dbReference type="ChEBI" id="CHEBI:18420"/>
        <label>2</label>
    </ligand>
</feature>
<dbReference type="EC" id="3.1.3.11" evidence="1"/>
<dbReference type="EMBL" id="CP001649">
    <property type="protein sequence ID" value="ACS79877.1"/>
    <property type="molecule type" value="Genomic_DNA"/>
</dbReference>
<dbReference type="RefSeq" id="WP_015851693.1">
    <property type="nucleotide sequence ID" value="NC_012881.1"/>
</dbReference>
<dbReference type="SMR" id="C6BTU7"/>
<dbReference type="STRING" id="526222.Desal_1815"/>
<dbReference type="KEGG" id="dsa:Desal_1815"/>
<dbReference type="eggNOG" id="COG0158">
    <property type="taxonomic scope" value="Bacteria"/>
</dbReference>
<dbReference type="HOGENOM" id="CLU_039977_2_2_7"/>
<dbReference type="OrthoDB" id="9806756at2"/>
<dbReference type="UniPathway" id="UPA00138"/>
<dbReference type="Proteomes" id="UP000002601">
    <property type="component" value="Chromosome"/>
</dbReference>
<dbReference type="GO" id="GO:0005829">
    <property type="term" value="C:cytosol"/>
    <property type="evidence" value="ECO:0007669"/>
    <property type="project" value="TreeGrafter"/>
</dbReference>
<dbReference type="GO" id="GO:0042132">
    <property type="term" value="F:fructose 1,6-bisphosphate 1-phosphatase activity"/>
    <property type="evidence" value="ECO:0007669"/>
    <property type="project" value="UniProtKB-UniRule"/>
</dbReference>
<dbReference type="GO" id="GO:0000287">
    <property type="term" value="F:magnesium ion binding"/>
    <property type="evidence" value="ECO:0007669"/>
    <property type="project" value="UniProtKB-UniRule"/>
</dbReference>
<dbReference type="GO" id="GO:0030388">
    <property type="term" value="P:fructose 1,6-bisphosphate metabolic process"/>
    <property type="evidence" value="ECO:0007669"/>
    <property type="project" value="TreeGrafter"/>
</dbReference>
<dbReference type="GO" id="GO:0006002">
    <property type="term" value="P:fructose 6-phosphate metabolic process"/>
    <property type="evidence" value="ECO:0007669"/>
    <property type="project" value="TreeGrafter"/>
</dbReference>
<dbReference type="GO" id="GO:0006000">
    <property type="term" value="P:fructose metabolic process"/>
    <property type="evidence" value="ECO:0007669"/>
    <property type="project" value="TreeGrafter"/>
</dbReference>
<dbReference type="GO" id="GO:0006094">
    <property type="term" value="P:gluconeogenesis"/>
    <property type="evidence" value="ECO:0007669"/>
    <property type="project" value="UniProtKB-UniRule"/>
</dbReference>
<dbReference type="GO" id="GO:0005986">
    <property type="term" value="P:sucrose biosynthetic process"/>
    <property type="evidence" value="ECO:0007669"/>
    <property type="project" value="TreeGrafter"/>
</dbReference>
<dbReference type="CDD" id="cd00354">
    <property type="entry name" value="FBPase"/>
    <property type="match status" value="1"/>
</dbReference>
<dbReference type="FunFam" id="3.30.540.10:FF:000002">
    <property type="entry name" value="Fructose-1,6-bisphosphatase class 1"/>
    <property type="match status" value="1"/>
</dbReference>
<dbReference type="FunFam" id="3.40.190.80:FF:000001">
    <property type="entry name" value="Fructose-1,6-bisphosphatase class 1"/>
    <property type="match status" value="1"/>
</dbReference>
<dbReference type="Gene3D" id="3.40.190.80">
    <property type="match status" value="1"/>
</dbReference>
<dbReference type="Gene3D" id="3.30.540.10">
    <property type="entry name" value="Fructose-1,6-Bisphosphatase, subunit A, domain 1"/>
    <property type="match status" value="1"/>
</dbReference>
<dbReference type="HAMAP" id="MF_01855">
    <property type="entry name" value="FBPase_class1"/>
    <property type="match status" value="1"/>
</dbReference>
<dbReference type="InterPro" id="IPR044015">
    <property type="entry name" value="FBPase_C_dom"/>
</dbReference>
<dbReference type="InterPro" id="IPR000146">
    <property type="entry name" value="FBPase_class-1"/>
</dbReference>
<dbReference type="InterPro" id="IPR033391">
    <property type="entry name" value="FBPase_N"/>
</dbReference>
<dbReference type="InterPro" id="IPR028343">
    <property type="entry name" value="FBPtase"/>
</dbReference>
<dbReference type="NCBIfam" id="NF006778">
    <property type="entry name" value="PRK09293.1-1"/>
    <property type="match status" value="1"/>
</dbReference>
<dbReference type="NCBIfam" id="NF006779">
    <property type="entry name" value="PRK09293.1-3"/>
    <property type="match status" value="1"/>
</dbReference>
<dbReference type="PANTHER" id="PTHR11556">
    <property type="entry name" value="FRUCTOSE-1,6-BISPHOSPHATASE-RELATED"/>
    <property type="match status" value="1"/>
</dbReference>
<dbReference type="PANTHER" id="PTHR11556:SF35">
    <property type="entry name" value="SEDOHEPTULOSE-1,7-BISPHOSPHATASE, CHLOROPLASTIC"/>
    <property type="match status" value="1"/>
</dbReference>
<dbReference type="Pfam" id="PF00316">
    <property type="entry name" value="FBPase"/>
    <property type="match status" value="1"/>
</dbReference>
<dbReference type="Pfam" id="PF18913">
    <property type="entry name" value="FBPase_C"/>
    <property type="match status" value="1"/>
</dbReference>
<dbReference type="PIRSF" id="PIRSF500210">
    <property type="entry name" value="FBPtase"/>
    <property type="match status" value="1"/>
</dbReference>
<dbReference type="PIRSF" id="PIRSF000904">
    <property type="entry name" value="FBPtase_SBPase"/>
    <property type="match status" value="1"/>
</dbReference>
<dbReference type="PRINTS" id="PR00115">
    <property type="entry name" value="F16BPHPHTASE"/>
</dbReference>
<dbReference type="SUPFAM" id="SSF56655">
    <property type="entry name" value="Carbohydrate phosphatase"/>
    <property type="match status" value="1"/>
</dbReference>
<gene>
    <name evidence="1" type="primary">fbp</name>
    <name type="ordered locus">Desal_1815</name>
</gene>
<keyword id="KW-0119">Carbohydrate metabolism</keyword>
<keyword id="KW-0963">Cytoplasm</keyword>
<keyword id="KW-0378">Hydrolase</keyword>
<keyword id="KW-0460">Magnesium</keyword>
<keyword id="KW-0479">Metal-binding</keyword>
<keyword id="KW-1185">Reference proteome</keyword>